<keyword id="KW-1185">Reference proteome</keyword>
<keyword id="KW-0687">Ribonucleoprotein</keyword>
<keyword id="KW-0689">Ribosomal protein</keyword>
<keyword id="KW-0694">RNA-binding</keyword>
<keyword id="KW-0699">rRNA-binding</keyword>
<keyword id="KW-0820">tRNA-binding</keyword>
<proteinExistence type="inferred from homology"/>
<reference key="1">
    <citation type="submission" date="2006-08" db="EMBL/GenBank/DDBJ databases">
        <title>Complete sequence of Maricaulis maris MCS10.</title>
        <authorList>
            <consortium name="US DOE Joint Genome Institute"/>
            <person name="Copeland A."/>
            <person name="Lucas S."/>
            <person name="Lapidus A."/>
            <person name="Barry K."/>
            <person name="Detter J.C."/>
            <person name="Glavina del Rio T."/>
            <person name="Hammon N."/>
            <person name="Israni S."/>
            <person name="Dalin E."/>
            <person name="Tice H."/>
            <person name="Pitluck S."/>
            <person name="Saunders E."/>
            <person name="Brettin T."/>
            <person name="Bruce D."/>
            <person name="Han C."/>
            <person name="Tapia R."/>
            <person name="Gilna P."/>
            <person name="Schmutz J."/>
            <person name="Larimer F."/>
            <person name="Land M."/>
            <person name="Hauser L."/>
            <person name="Kyrpides N."/>
            <person name="Mikhailova N."/>
            <person name="Viollier P."/>
            <person name="Stephens C."/>
            <person name="Richardson P."/>
        </authorList>
    </citation>
    <scope>NUCLEOTIDE SEQUENCE [LARGE SCALE GENOMIC DNA]</scope>
    <source>
        <strain>MCS10</strain>
    </source>
</reference>
<gene>
    <name evidence="1" type="primary">rplE</name>
    <name type="ordered locus">Mmar10_1783</name>
</gene>
<accession>Q0ANR2</accession>
<comment type="function">
    <text evidence="1">This is one of the proteins that bind and probably mediate the attachment of the 5S RNA into the large ribosomal subunit, where it forms part of the central protuberance. In the 70S ribosome it contacts protein S13 of the 30S subunit (bridge B1b), connecting the 2 subunits; this bridge is implicated in subunit movement. Contacts the P site tRNA; the 5S rRNA and some of its associated proteins might help stabilize positioning of ribosome-bound tRNAs.</text>
</comment>
<comment type="subunit">
    <text evidence="1">Part of the 50S ribosomal subunit; part of the 5S rRNA/L5/L18/L25 subcomplex. Contacts the 5S rRNA and the P site tRNA. Forms a bridge to the 30S subunit in the 70S ribosome.</text>
</comment>
<comment type="similarity">
    <text evidence="1">Belongs to the universal ribosomal protein uL5 family.</text>
</comment>
<dbReference type="EMBL" id="CP000449">
    <property type="protein sequence ID" value="ABI66075.1"/>
    <property type="molecule type" value="Genomic_DNA"/>
</dbReference>
<dbReference type="RefSeq" id="WP_011643721.1">
    <property type="nucleotide sequence ID" value="NC_008347.1"/>
</dbReference>
<dbReference type="SMR" id="Q0ANR2"/>
<dbReference type="STRING" id="394221.Mmar10_1783"/>
<dbReference type="KEGG" id="mmr:Mmar10_1783"/>
<dbReference type="eggNOG" id="COG0094">
    <property type="taxonomic scope" value="Bacteria"/>
</dbReference>
<dbReference type="HOGENOM" id="CLU_061015_2_1_5"/>
<dbReference type="OrthoDB" id="9806626at2"/>
<dbReference type="Proteomes" id="UP000001964">
    <property type="component" value="Chromosome"/>
</dbReference>
<dbReference type="GO" id="GO:1990904">
    <property type="term" value="C:ribonucleoprotein complex"/>
    <property type="evidence" value="ECO:0007669"/>
    <property type="project" value="UniProtKB-KW"/>
</dbReference>
<dbReference type="GO" id="GO:0005840">
    <property type="term" value="C:ribosome"/>
    <property type="evidence" value="ECO:0007669"/>
    <property type="project" value="UniProtKB-KW"/>
</dbReference>
<dbReference type="GO" id="GO:0019843">
    <property type="term" value="F:rRNA binding"/>
    <property type="evidence" value="ECO:0007669"/>
    <property type="project" value="UniProtKB-UniRule"/>
</dbReference>
<dbReference type="GO" id="GO:0003735">
    <property type="term" value="F:structural constituent of ribosome"/>
    <property type="evidence" value="ECO:0007669"/>
    <property type="project" value="InterPro"/>
</dbReference>
<dbReference type="GO" id="GO:0000049">
    <property type="term" value="F:tRNA binding"/>
    <property type="evidence" value="ECO:0007669"/>
    <property type="project" value="UniProtKB-UniRule"/>
</dbReference>
<dbReference type="GO" id="GO:0006412">
    <property type="term" value="P:translation"/>
    <property type="evidence" value="ECO:0007669"/>
    <property type="project" value="UniProtKB-UniRule"/>
</dbReference>
<dbReference type="FunFam" id="3.30.1440.10:FF:000001">
    <property type="entry name" value="50S ribosomal protein L5"/>
    <property type="match status" value="1"/>
</dbReference>
<dbReference type="Gene3D" id="3.30.1440.10">
    <property type="match status" value="1"/>
</dbReference>
<dbReference type="HAMAP" id="MF_01333_B">
    <property type="entry name" value="Ribosomal_uL5_B"/>
    <property type="match status" value="1"/>
</dbReference>
<dbReference type="InterPro" id="IPR002132">
    <property type="entry name" value="Ribosomal_uL5"/>
</dbReference>
<dbReference type="InterPro" id="IPR020930">
    <property type="entry name" value="Ribosomal_uL5_bac-type"/>
</dbReference>
<dbReference type="InterPro" id="IPR031309">
    <property type="entry name" value="Ribosomal_uL5_C"/>
</dbReference>
<dbReference type="InterPro" id="IPR020929">
    <property type="entry name" value="Ribosomal_uL5_CS"/>
</dbReference>
<dbReference type="InterPro" id="IPR022803">
    <property type="entry name" value="Ribosomal_uL5_dom_sf"/>
</dbReference>
<dbReference type="InterPro" id="IPR031310">
    <property type="entry name" value="Ribosomal_uL5_N"/>
</dbReference>
<dbReference type="NCBIfam" id="NF000585">
    <property type="entry name" value="PRK00010.1"/>
    <property type="match status" value="1"/>
</dbReference>
<dbReference type="PANTHER" id="PTHR11994">
    <property type="entry name" value="60S RIBOSOMAL PROTEIN L11-RELATED"/>
    <property type="match status" value="1"/>
</dbReference>
<dbReference type="Pfam" id="PF00281">
    <property type="entry name" value="Ribosomal_L5"/>
    <property type="match status" value="1"/>
</dbReference>
<dbReference type="Pfam" id="PF00673">
    <property type="entry name" value="Ribosomal_L5_C"/>
    <property type="match status" value="1"/>
</dbReference>
<dbReference type="PIRSF" id="PIRSF002161">
    <property type="entry name" value="Ribosomal_L5"/>
    <property type="match status" value="1"/>
</dbReference>
<dbReference type="SUPFAM" id="SSF55282">
    <property type="entry name" value="RL5-like"/>
    <property type="match status" value="1"/>
</dbReference>
<dbReference type="PROSITE" id="PS00358">
    <property type="entry name" value="RIBOSOMAL_L5"/>
    <property type="match status" value="1"/>
</dbReference>
<evidence type="ECO:0000255" key="1">
    <source>
        <dbReference type="HAMAP-Rule" id="MF_01333"/>
    </source>
</evidence>
<evidence type="ECO:0000305" key="2"/>
<protein>
    <recommendedName>
        <fullName evidence="1">Large ribosomal subunit protein uL5</fullName>
    </recommendedName>
    <alternativeName>
        <fullName evidence="2">50S ribosomal protein L5</fullName>
    </alternativeName>
</protein>
<sequence length="186" mass="20967">MSDTATYTPRLRAKYTETIRAAMKEKFGYANDMMIPRLDKIVINMGVGEASQDSKKIKGALEDLEAITGQKPVKTVAKKSIAGFKLREEQVIGAKVTLRQDRMYEFLDRLITIALPRVRDFRGLNGKSFDGRGNYAMGMKEHIVFPEIDYDKVEKIRGMDIVVCTTAGNDEEAKALLAEFDFPFTN</sequence>
<feature type="chain" id="PRO_1000052766" description="Large ribosomal subunit protein uL5">
    <location>
        <begin position="1"/>
        <end position="186"/>
    </location>
</feature>
<organism>
    <name type="scientific">Maricaulis maris (strain MCS10)</name>
    <name type="common">Caulobacter maris</name>
    <dbReference type="NCBI Taxonomy" id="394221"/>
    <lineage>
        <taxon>Bacteria</taxon>
        <taxon>Pseudomonadati</taxon>
        <taxon>Pseudomonadota</taxon>
        <taxon>Alphaproteobacteria</taxon>
        <taxon>Maricaulales</taxon>
        <taxon>Maricaulaceae</taxon>
        <taxon>Maricaulis</taxon>
    </lineage>
</organism>
<name>RL5_MARMM</name>